<evidence type="ECO:0000255" key="1"/>
<evidence type="ECO:0000269" key="2">
    <source>
    </source>
</evidence>
<evidence type="ECO:0000269" key="3">
    <source>
    </source>
</evidence>
<evidence type="ECO:0000269" key="4">
    <source>
    </source>
</evidence>
<evidence type="ECO:0000305" key="5"/>
<evidence type="ECO:0000312" key="6">
    <source>
        <dbReference type="PomBase" id="SPAP8A3.14c"/>
    </source>
</evidence>
<dbReference type="EMBL" id="CU329670">
    <property type="protein sequence ID" value="CAB55181.1"/>
    <property type="molecule type" value="Genomic_DNA"/>
</dbReference>
<dbReference type="PIR" id="T39251">
    <property type="entry name" value="T39251"/>
</dbReference>
<dbReference type="RefSeq" id="NP_594953.1">
    <property type="nucleotide sequence ID" value="NM_001020384.2"/>
</dbReference>
<dbReference type="BioGRID" id="279581">
    <property type="interactions" value="1"/>
</dbReference>
<dbReference type="ComplexPortal" id="CPX-25771">
    <property type="entry name" value="MRH5C complex"/>
</dbReference>
<dbReference type="FunCoup" id="Q9UT03">
    <property type="interactions" value="15"/>
</dbReference>
<dbReference type="STRING" id="284812.Q9UT03"/>
<dbReference type="iPTMnet" id="Q9UT03"/>
<dbReference type="PaxDb" id="4896-SPAP8A3.14c.1"/>
<dbReference type="EnsemblFungi" id="SPAP8A3.14c.1">
    <property type="protein sequence ID" value="SPAP8A3.14c.1:pep"/>
    <property type="gene ID" value="SPAP8A3.14c"/>
</dbReference>
<dbReference type="GeneID" id="2543149"/>
<dbReference type="KEGG" id="spo:2543149"/>
<dbReference type="PomBase" id="SPAP8A3.14c">
    <property type="gene designation" value="sls1"/>
</dbReference>
<dbReference type="VEuPathDB" id="FungiDB:SPAP8A3.14c"/>
<dbReference type="eggNOG" id="ENOG502RS0A">
    <property type="taxonomic scope" value="Eukaryota"/>
</dbReference>
<dbReference type="HOGENOM" id="CLU_406054_0_0_1"/>
<dbReference type="InParanoid" id="Q9UT03"/>
<dbReference type="OMA" id="VTHNFVE"/>
<dbReference type="PRO" id="PR:Q9UT03"/>
<dbReference type="Proteomes" id="UP000002485">
    <property type="component" value="Chromosome I"/>
</dbReference>
<dbReference type="GO" id="GO:0005743">
    <property type="term" value="C:mitochondrial inner membrane"/>
    <property type="evidence" value="ECO:0000266"/>
    <property type="project" value="PomBase"/>
</dbReference>
<dbReference type="GO" id="GO:0042645">
    <property type="term" value="C:mitochondrial nucleoid"/>
    <property type="evidence" value="ECO:0000266"/>
    <property type="project" value="PomBase"/>
</dbReference>
<dbReference type="GO" id="GO:0005739">
    <property type="term" value="C:mitochondrion"/>
    <property type="evidence" value="ECO:0007005"/>
    <property type="project" value="PomBase"/>
</dbReference>
<dbReference type="GO" id="GO:0045182">
    <property type="term" value="F:translation regulator activity"/>
    <property type="evidence" value="ECO:0000315"/>
    <property type="project" value="UniProtKB"/>
</dbReference>
<dbReference type="GO" id="GO:0032543">
    <property type="term" value="P:mitochondrial translation"/>
    <property type="evidence" value="ECO:0000269"/>
    <property type="project" value="PomBase"/>
</dbReference>
<dbReference type="GO" id="GO:0070124">
    <property type="term" value="P:mitochondrial translational initiation"/>
    <property type="evidence" value="ECO:0000315"/>
    <property type="project" value="UniProtKB"/>
</dbReference>
<dbReference type="InterPro" id="IPR048401">
    <property type="entry name" value="SLS1_C"/>
</dbReference>
<dbReference type="InterPro" id="IPR032741">
    <property type="entry name" value="Sls1_KH-1"/>
</dbReference>
<dbReference type="InterPro" id="IPR048400">
    <property type="entry name" value="SLS1_N"/>
</dbReference>
<dbReference type="Pfam" id="PF14611">
    <property type="entry name" value="KH_SLS1_1"/>
    <property type="match status" value="1"/>
</dbReference>
<dbReference type="Pfam" id="PF20778">
    <property type="entry name" value="SLS1_C"/>
    <property type="match status" value="1"/>
</dbReference>
<dbReference type="Pfam" id="PF20776">
    <property type="entry name" value="SLS1_N"/>
    <property type="match status" value="1"/>
</dbReference>
<gene>
    <name type="primary">sls1</name>
    <name type="ORF">SPAP8A3.14c</name>
</gene>
<protein>
    <recommendedName>
        <fullName evidence="6">Mitochondrial translation factor sls1</fullName>
    </recommendedName>
</protein>
<comment type="function">
    <text evidence="4">Translation activation factor that as part of the MRH5C complex specifically recruits cox1 mRNA to the mitochondrial ribosome for translation initiation.</text>
</comment>
<comment type="subunit">
    <text evidence="3 4">Component of the MRH5C complex, composed of mrh5, ppr4, mtf2, and sls1 (PubMed:34634819, PubMed:38499152). Proteins mtf2 and sls1 form a subcomplex that serves as a scaffold to bring mrh5 and ppr4 together (PubMed:38499152). The MRH5C complex associates with the small subunit of the mitochondrial ribosome (PubMed:38499152).</text>
</comment>
<comment type="subcellular location">
    <subcellularLocation>
        <location evidence="2">Mitochondrion inner membrane</location>
    </subcellularLocation>
</comment>
<comment type="disruption phenotype">
    <text evidence="3 4">Decreases protein level of mitochondrial translation factor mtf2 (PubMed:38499152). Protein cox1 absent (PubMed:34634819). Abolishes growth on the respiratory carbon source glycerol (PubMed:34634819, PubMed:38499152).</text>
</comment>
<comment type="similarity">
    <text evidence="5">Belongs to the SLS1 family.</text>
</comment>
<keyword id="KW-0472">Membrane</keyword>
<keyword id="KW-0496">Mitochondrion</keyword>
<keyword id="KW-0999">Mitochondrion inner membrane</keyword>
<keyword id="KW-0648">Protein biosynthesis</keyword>
<keyword id="KW-1185">Reference proteome</keyword>
<keyword id="KW-0809">Transit peptide</keyword>
<proteinExistence type="evidence at protein level"/>
<feature type="transit peptide" description="Mitochondrion" evidence="1">
    <location>
        <begin position="1"/>
        <end position="41"/>
    </location>
</feature>
<feature type="chain" id="PRO_0000374045" description="Mitochondrial translation factor sls1">
    <location>
        <begin position="42"/>
        <end position="677"/>
    </location>
</feature>
<reference key="1">
    <citation type="journal article" date="2002" name="Nature">
        <title>The genome sequence of Schizosaccharomyces pombe.</title>
        <authorList>
            <person name="Wood V."/>
            <person name="Gwilliam R."/>
            <person name="Rajandream M.A."/>
            <person name="Lyne M.H."/>
            <person name="Lyne R."/>
            <person name="Stewart A."/>
            <person name="Sgouros J.G."/>
            <person name="Peat N."/>
            <person name="Hayles J."/>
            <person name="Baker S.G."/>
            <person name="Basham D."/>
            <person name="Bowman S."/>
            <person name="Brooks K."/>
            <person name="Brown D."/>
            <person name="Brown S."/>
            <person name="Chillingworth T."/>
            <person name="Churcher C.M."/>
            <person name="Collins M."/>
            <person name="Connor R."/>
            <person name="Cronin A."/>
            <person name="Davis P."/>
            <person name="Feltwell T."/>
            <person name="Fraser A."/>
            <person name="Gentles S."/>
            <person name="Goble A."/>
            <person name="Hamlin N."/>
            <person name="Harris D.E."/>
            <person name="Hidalgo J."/>
            <person name="Hodgson G."/>
            <person name="Holroyd S."/>
            <person name="Hornsby T."/>
            <person name="Howarth S."/>
            <person name="Huckle E.J."/>
            <person name="Hunt S."/>
            <person name="Jagels K."/>
            <person name="James K.D."/>
            <person name="Jones L."/>
            <person name="Jones M."/>
            <person name="Leather S."/>
            <person name="McDonald S."/>
            <person name="McLean J."/>
            <person name="Mooney P."/>
            <person name="Moule S."/>
            <person name="Mungall K.L."/>
            <person name="Murphy L.D."/>
            <person name="Niblett D."/>
            <person name="Odell C."/>
            <person name="Oliver K."/>
            <person name="O'Neil S."/>
            <person name="Pearson D."/>
            <person name="Quail M.A."/>
            <person name="Rabbinowitsch E."/>
            <person name="Rutherford K.M."/>
            <person name="Rutter S."/>
            <person name="Saunders D."/>
            <person name="Seeger K."/>
            <person name="Sharp S."/>
            <person name="Skelton J."/>
            <person name="Simmonds M.N."/>
            <person name="Squares R."/>
            <person name="Squares S."/>
            <person name="Stevens K."/>
            <person name="Taylor K."/>
            <person name="Taylor R.G."/>
            <person name="Tivey A."/>
            <person name="Walsh S.V."/>
            <person name="Warren T."/>
            <person name="Whitehead S."/>
            <person name="Woodward J.R."/>
            <person name="Volckaert G."/>
            <person name="Aert R."/>
            <person name="Robben J."/>
            <person name="Grymonprez B."/>
            <person name="Weltjens I."/>
            <person name="Vanstreels E."/>
            <person name="Rieger M."/>
            <person name="Schaefer M."/>
            <person name="Mueller-Auer S."/>
            <person name="Gabel C."/>
            <person name="Fuchs M."/>
            <person name="Duesterhoeft A."/>
            <person name="Fritzc C."/>
            <person name="Holzer E."/>
            <person name="Moestl D."/>
            <person name="Hilbert H."/>
            <person name="Borzym K."/>
            <person name="Langer I."/>
            <person name="Beck A."/>
            <person name="Lehrach H."/>
            <person name="Reinhardt R."/>
            <person name="Pohl T.M."/>
            <person name="Eger P."/>
            <person name="Zimmermann W."/>
            <person name="Wedler H."/>
            <person name="Wambutt R."/>
            <person name="Purnelle B."/>
            <person name="Goffeau A."/>
            <person name="Cadieu E."/>
            <person name="Dreano S."/>
            <person name="Gloux S."/>
            <person name="Lelaure V."/>
            <person name="Mottier S."/>
            <person name="Galibert F."/>
            <person name="Aves S.J."/>
            <person name="Xiang Z."/>
            <person name="Hunt C."/>
            <person name="Moore K."/>
            <person name="Hurst S.M."/>
            <person name="Lucas M."/>
            <person name="Rochet M."/>
            <person name="Gaillardin C."/>
            <person name="Tallada V.A."/>
            <person name="Garzon A."/>
            <person name="Thode G."/>
            <person name="Daga R.R."/>
            <person name="Cruzado L."/>
            <person name="Jimenez J."/>
            <person name="Sanchez M."/>
            <person name="del Rey F."/>
            <person name="Benito J."/>
            <person name="Dominguez A."/>
            <person name="Revuelta J.L."/>
            <person name="Moreno S."/>
            <person name="Armstrong J."/>
            <person name="Forsburg S.L."/>
            <person name="Cerutti L."/>
            <person name="Lowe T."/>
            <person name="McCombie W.R."/>
            <person name="Paulsen I."/>
            <person name="Potashkin J."/>
            <person name="Shpakovski G.V."/>
            <person name="Ussery D."/>
            <person name="Barrell B.G."/>
            <person name="Nurse P."/>
        </authorList>
    </citation>
    <scope>NUCLEOTIDE SEQUENCE [LARGE SCALE GENOMIC DNA]</scope>
    <source>
        <strain>972 / ATCC 24843</strain>
    </source>
</reference>
<reference key="2">
    <citation type="journal article" date="2006" name="Nat. Biotechnol.">
        <title>ORFeome cloning and global analysis of protein localization in the fission yeast Schizosaccharomyces pombe.</title>
        <authorList>
            <person name="Matsuyama A."/>
            <person name="Arai R."/>
            <person name="Yashiroda Y."/>
            <person name="Shirai A."/>
            <person name="Kamata A."/>
            <person name="Sekido S."/>
            <person name="Kobayashi Y."/>
            <person name="Hashimoto A."/>
            <person name="Hamamoto M."/>
            <person name="Hiraoka Y."/>
            <person name="Horinouchi S."/>
            <person name="Yoshida M."/>
        </authorList>
    </citation>
    <scope>SUBCELLULAR LOCATION [LARGE SCALE ANALYSIS]</scope>
</reference>
<reference key="3">
    <citation type="journal article" date="2021" name="Nucleic Acids Res.">
        <title>Translational activators and mitoribosomal isoforms cooperate to mediate mRNA-specific translation in Schizosaccharomyces pombe mitochondria.</title>
        <authorList>
            <person name="Herbert C.J."/>
            <person name="Labarre-Mariotte S."/>
            <person name="Cornu D."/>
            <person name="Sophie C."/>
            <person name="Panozzo C."/>
            <person name="Michel T."/>
            <person name="Dujardin G."/>
            <person name="Bonnefoy N."/>
        </authorList>
    </citation>
    <scope>IDENTIFICATION IN THE MRH5C COMPLEX</scope>
    <scope>DISRUPTION PHENOTYPE</scope>
</reference>
<reference key="4">
    <citation type="journal article" date="2024" name="J. Biol. Chem.">
        <title>Sls1 and Mtf2 mediate the assembly of the Mrh5C complex required for activation of cox1 mRNA translation.</title>
        <authorList>
            <person name="Wang Y."/>
            <person name="Jin T."/>
            <person name="Huang Y."/>
        </authorList>
    </citation>
    <scope>FUNCTION</scope>
    <scope>IDENTIFICATION IN THE MRH5C COMPLEX</scope>
    <scope>SUBUNIT</scope>
    <scope>DISRUPTION PHENOTYPE</scope>
</reference>
<accession>Q9UT03</accession>
<sequence length="677" mass="77934">MVKGSLLNRNINALNCRCLAQKLTSWGLLNIRSIHADSNRGVVNSSNLIIIPPYKPKSKSVLRSPYLTSHYVDALAFKLVEDPTVHNTLEDVFQDIESYKPKSVNTSAKSFRQLVNTLEVAFRKEQLRKFAKVFHIKSSSLRKKEIIERILLDHWKLRIHGDAMDDMLAIKDVTLCPLEMFFLLLNNASALRDISQKHAAHVVINVTNNNIKIEAKKRDVAIVEELISGIFKHLKSKTIDVTEYYANIINKNAVLLSERCKAYIELSGKAQIKITTAFGNCSFDEIERKLLSFVMLFENTDKCLIDSECLTSKKSFTLNDFTYDFRLPWYLKDDSWKRWCRVKEYSWNTSVLSDEALTRNSLTLPVPIKPSINKDISSIEVKDLSQKNTTQSKKLNSYIRDSFHSVNDFWFSSHATNTEQCFTKRLTATFGYSLFSSSFLSHTKNPDVASFYVKERSKAHHFLFNTFVDQIPSYLKNHSILDETTRKSFYRIILSSNSLSTSLTYPLIEIILPIKNGFLMGKETFQIAFKKSRGYQILLPESELDLKINTTTFKTIANNKSVDAFLDDCVSFFSRPEMTQDSQLNASSGFLTNFSLKDSTDRFYKVLSYEKVSERFVKIDDSYITYSDIFSPLSHSHKDWFRIHTEENSSKNFYEIISEIVGGFPYYSQANERSLIS</sequence>
<organism>
    <name type="scientific">Schizosaccharomyces pombe (strain 972 / ATCC 24843)</name>
    <name type="common">Fission yeast</name>
    <dbReference type="NCBI Taxonomy" id="284812"/>
    <lineage>
        <taxon>Eukaryota</taxon>
        <taxon>Fungi</taxon>
        <taxon>Dikarya</taxon>
        <taxon>Ascomycota</taxon>
        <taxon>Taphrinomycotina</taxon>
        <taxon>Schizosaccharomycetes</taxon>
        <taxon>Schizosaccharomycetales</taxon>
        <taxon>Schizosaccharomycetaceae</taxon>
        <taxon>Schizosaccharomyces</taxon>
    </lineage>
</organism>
<name>SLS1_SCHPO</name>